<accession>A0JP80</accession>
<comment type="function">
    <text evidence="2">Fatty acyl-coenzyme A (CoA) diphosphatase that hydrolyzes fatty acyl-CoA to yield acyl-4'-phosphopantetheine and adenosine 3',5'-bisphosphate (By similarity). Preferentially hydrolyzes unsaturated long-chain acyl-CoA substrates in the endoplasmic reticulum (ER) lumen (By similarity). This catalytic activity is required for maintaining ER structure and for lipid droplets (LDs) biogenesis, which are lipid storage organelles involved in maintaining lipid and energy homeostasis (By similarity). May directly bind to diacylglycerol (DAGs) and triacylglycerol, which is also important for LD biogenesis (By similarity). May support directional budding of nacent LDs from the ER into the cytosol by reducing DAG levels at sites of LD formation (By similarity). May play a role in the regulation of cell morphology, ER morphology and cytoskeletal organization (By similarity).</text>
</comment>
<comment type="catalytic activity">
    <reaction evidence="2">
        <text>an acyl-CoA + H2O = an acyl-4'-phosphopantetheine + adenosine 3',5'-bisphosphate + 2 H(+)</text>
        <dbReference type="Rhea" id="RHEA:50044"/>
        <dbReference type="ChEBI" id="CHEBI:15377"/>
        <dbReference type="ChEBI" id="CHEBI:15378"/>
        <dbReference type="ChEBI" id="CHEBI:58342"/>
        <dbReference type="ChEBI" id="CHEBI:58343"/>
        <dbReference type="ChEBI" id="CHEBI:132023"/>
    </reaction>
    <physiologicalReaction direction="left-to-right" evidence="2">
        <dbReference type="Rhea" id="RHEA:50045"/>
    </physiologicalReaction>
</comment>
<comment type="subcellular location">
    <subcellularLocation>
        <location evidence="2">Endoplasmic reticulum membrane</location>
        <topology evidence="2">Multi-pass membrane protein</topology>
    </subcellularLocation>
</comment>
<comment type="similarity">
    <text evidence="2">Belongs to the FIT family. FIT2 subfamily.</text>
</comment>
<name>FITM2_XENTR</name>
<proteinExistence type="evidence at transcript level"/>
<protein>
    <recommendedName>
        <fullName evidence="2">Acyl-coenzyme A diphosphatase FITM2</fullName>
        <ecNumber evidence="2">3.6.1.-</ecNumber>
    </recommendedName>
    <alternativeName>
        <fullName evidence="2">Fat storage-inducing transmembrane protein 2</fullName>
    </alternativeName>
    <alternativeName>
        <fullName evidence="2">Fat-inducing protein 2</fullName>
    </alternativeName>
</protein>
<gene>
    <name evidence="2" type="primary">fitm2</name>
    <name evidence="2" type="synonym">fit2</name>
</gene>
<dbReference type="EC" id="3.6.1.-" evidence="2"/>
<dbReference type="EMBL" id="BC127286">
    <property type="protein sequence ID" value="AAI27287.1"/>
    <property type="molecule type" value="mRNA"/>
</dbReference>
<dbReference type="RefSeq" id="NP_001090654.1">
    <property type="nucleotide sequence ID" value="NM_001097185.1"/>
</dbReference>
<dbReference type="FunCoup" id="A0JP80">
    <property type="interactions" value="910"/>
</dbReference>
<dbReference type="STRING" id="8364.ENSXETP00000006236"/>
<dbReference type="PaxDb" id="8364-ENSXETP00000003686"/>
<dbReference type="DNASU" id="100036626"/>
<dbReference type="GeneID" id="100036626"/>
<dbReference type="KEGG" id="xtr:100036626"/>
<dbReference type="AGR" id="Xenbase:XB-GENE-950532"/>
<dbReference type="CTD" id="128486"/>
<dbReference type="Xenbase" id="XB-GENE-950532">
    <property type="gene designation" value="fitm2"/>
</dbReference>
<dbReference type="eggNOG" id="KOG3750">
    <property type="taxonomic scope" value="Eukaryota"/>
</dbReference>
<dbReference type="InParanoid" id="A0JP80"/>
<dbReference type="OrthoDB" id="5579088at2759"/>
<dbReference type="Proteomes" id="UP000008143">
    <property type="component" value="Chromosome 10"/>
</dbReference>
<dbReference type="GO" id="GO:0005789">
    <property type="term" value="C:endoplasmic reticulum membrane"/>
    <property type="evidence" value="ECO:0007669"/>
    <property type="project" value="UniProtKB-SubCell"/>
</dbReference>
<dbReference type="GO" id="GO:0010945">
    <property type="term" value="F:coenzyme A diphosphatase activity"/>
    <property type="evidence" value="ECO:0000250"/>
    <property type="project" value="UniProtKB"/>
</dbReference>
<dbReference type="GO" id="GO:0019992">
    <property type="term" value="F:diacylglycerol binding"/>
    <property type="evidence" value="ECO:0000250"/>
    <property type="project" value="UniProtKB"/>
</dbReference>
<dbReference type="GO" id="GO:0017129">
    <property type="term" value="F:triglyceride binding"/>
    <property type="evidence" value="ECO:0000250"/>
    <property type="project" value="UniProtKB"/>
</dbReference>
<dbReference type="GO" id="GO:0007010">
    <property type="term" value="P:cytoskeleton organization"/>
    <property type="evidence" value="ECO:0000250"/>
    <property type="project" value="UniProtKB"/>
</dbReference>
<dbReference type="GO" id="GO:0036115">
    <property type="term" value="P:fatty-acyl-CoA catabolic process"/>
    <property type="evidence" value="ECO:0000250"/>
    <property type="project" value="UniProtKB"/>
</dbReference>
<dbReference type="GO" id="GO:0140042">
    <property type="term" value="P:lipid droplet formation"/>
    <property type="evidence" value="ECO:0000250"/>
    <property type="project" value="UniProtKB"/>
</dbReference>
<dbReference type="GO" id="GO:0055088">
    <property type="term" value="P:lipid homeostasis"/>
    <property type="evidence" value="ECO:0000250"/>
    <property type="project" value="UniProtKB"/>
</dbReference>
<dbReference type="GO" id="GO:0022604">
    <property type="term" value="P:regulation of cell morphogenesis"/>
    <property type="evidence" value="ECO:0000250"/>
    <property type="project" value="UniProtKB"/>
</dbReference>
<dbReference type="HAMAP" id="MF_03230">
    <property type="entry name" value="FITM2"/>
    <property type="match status" value="1"/>
</dbReference>
<dbReference type="InterPro" id="IPR019388">
    <property type="entry name" value="FIT"/>
</dbReference>
<dbReference type="InterPro" id="IPR046401">
    <property type="entry name" value="FITM1/2"/>
</dbReference>
<dbReference type="PANTHER" id="PTHR23129">
    <property type="entry name" value="ACYL-COENZYME A DIPHOSPHATASE FITM2"/>
    <property type="match status" value="1"/>
</dbReference>
<dbReference type="PANTHER" id="PTHR23129:SF1">
    <property type="entry name" value="ACYL-COENZYME A DIPHOSPHATASE FITM2"/>
    <property type="match status" value="1"/>
</dbReference>
<dbReference type="Pfam" id="PF10261">
    <property type="entry name" value="FIT"/>
    <property type="match status" value="2"/>
</dbReference>
<reference key="1">
    <citation type="submission" date="2006-11" db="EMBL/GenBank/DDBJ databases">
        <authorList>
            <consortium name="NIH - Xenopus Gene Collection (XGC) project"/>
        </authorList>
    </citation>
    <scope>NUCLEOTIDE SEQUENCE [LARGE SCALE MRNA]</scope>
    <source>
        <tissue>Testis</tissue>
    </source>
</reference>
<sequence length="260" mass="30699">MERLENCAQMFQRRFLNESFRRHCPVLLACIVLGGSLLKELCPLPDSYWNNKRNVLNVYFVKFSWGWTLWLLLPFIALTNYKLTRSTTKVLRRLSSLLVSTLIWYLCTNLFLYIENITGSCYESEAMSDPKEHQDRRECRLHSGYWHGFDISGHCFLLSYCILLILEETSIISNIRFERHWHRMAINAQFAALSILVIIWVWMFLCTAVYFHNIFQKVIGTAFGILAWYITYRWWYLQPISPGLPPASASRSGKEPIYRN</sequence>
<organism>
    <name type="scientific">Xenopus tropicalis</name>
    <name type="common">Western clawed frog</name>
    <name type="synonym">Silurana tropicalis</name>
    <dbReference type="NCBI Taxonomy" id="8364"/>
    <lineage>
        <taxon>Eukaryota</taxon>
        <taxon>Metazoa</taxon>
        <taxon>Chordata</taxon>
        <taxon>Craniata</taxon>
        <taxon>Vertebrata</taxon>
        <taxon>Euteleostomi</taxon>
        <taxon>Amphibia</taxon>
        <taxon>Batrachia</taxon>
        <taxon>Anura</taxon>
        <taxon>Pipoidea</taxon>
        <taxon>Pipidae</taxon>
        <taxon>Xenopodinae</taxon>
        <taxon>Xenopus</taxon>
        <taxon>Silurana</taxon>
    </lineage>
</organism>
<feature type="chain" id="PRO_0000319573" description="Acyl-coenzyme A diphosphatase FITM2">
    <location>
        <begin position="1"/>
        <end position="260"/>
    </location>
</feature>
<feature type="topological domain" description="Cytoplasmic" evidence="3">
    <location>
        <begin position="1"/>
        <end position="23"/>
    </location>
</feature>
<feature type="transmembrane region" description="Helical" evidence="1">
    <location>
        <begin position="24"/>
        <end position="44"/>
    </location>
</feature>
<feature type="topological domain" description="Lumenal" evidence="3">
    <location>
        <begin position="45"/>
        <end position="57"/>
    </location>
</feature>
<feature type="transmembrane region" description="Helical" evidence="1">
    <location>
        <begin position="58"/>
        <end position="78"/>
    </location>
</feature>
<feature type="topological domain" description="Cytoplasmic" evidence="3">
    <location>
        <begin position="79"/>
        <end position="93"/>
    </location>
</feature>
<feature type="transmembrane region" description="Helical" evidence="1">
    <location>
        <begin position="94"/>
        <end position="114"/>
    </location>
</feature>
<feature type="topological domain" description="Lumenal" evidence="3">
    <location>
        <begin position="115"/>
        <end position="145"/>
    </location>
</feature>
<feature type="transmembrane region" description="Helical" evidence="1">
    <location>
        <begin position="146"/>
        <end position="166"/>
    </location>
</feature>
<feature type="topological domain" description="Cytoplasmic" evidence="3">
    <location>
        <begin position="167"/>
        <end position="189"/>
    </location>
</feature>
<feature type="transmembrane region" description="Helical" evidence="1">
    <location>
        <begin position="190"/>
        <end position="210"/>
    </location>
</feature>
<feature type="transmembrane region" description="Helical" evidence="1">
    <location>
        <begin position="211"/>
        <end position="231"/>
    </location>
</feature>
<feature type="topological domain" description="Cytoplasmic" evidence="3">
    <location>
        <begin position="232"/>
        <end position="260"/>
    </location>
</feature>
<feature type="active site" evidence="2">
    <location>
        <position position="154"/>
    </location>
</feature>
<feature type="active site" evidence="2">
    <location>
        <position position="212"/>
    </location>
</feature>
<evidence type="ECO:0000255" key="1"/>
<evidence type="ECO:0000255" key="2">
    <source>
        <dbReference type="HAMAP-Rule" id="MF_03230"/>
    </source>
</evidence>
<evidence type="ECO:0000305" key="3"/>
<keyword id="KW-0256">Endoplasmic reticulum</keyword>
<keyword id="KW-0378">Hydrolase</keyword>
<keyword id="KW-0443">Lipid metabolism</keyword>
<keyword id="KW-0472">Membrane</keyword>
<keyword id="KW-1185">Reference proteome</keyword>
<keyword id="KW-0812">Transmembrane</keyword>
<keyword id="KW-1133">Transmembrane helix</keyword>